<dbReference type="EC" id="3.4.21.90" evidence="2"/>
<dbReference type="EMBL" id="AF339484">
    <property type="protein sequence ID" value="AAO33339.1"/>
    <property type="molecule type" value="Genomic_RNA"/>
</dbReference>
<dbReference type="EMBL" id="AY702913">
    <property type="protein sequence ID" value="AAU85260.1"/>
    <property type="molecule type" value="Genomic_RNA"/>
</dbReference>
<dbReference type="EMBL" id="MF741771">
    <property type="protein sequence ID" value="ATL75445.1"/>
    <property type="molecule type" value="Genomic_RNA"/>
</dbReference>
<dbReference type="RefSeq" id="YP_164439.1">
    <property type="nucleotide sequence ID" value="NC_006558.1"/>
</dbReference>
<dbReference type="PDB" id="7FD2">
    <property type="method" value="EM"/>
    <property type="resolution" value="2.81 A"/>
    <property type="chains" value="A/E/I/M=816-1253, B/F/J/N=333-751, C/G/K/O=1-268"/>
</dbReference>
<dbReference type="PDB" id="7V4T">
    <property type="method" value="EM"/>
    <property type="resolution" value="4.04 A"/>
    <property type="chains" value="A/E/I/M=816-1253, B/F/J/N=333-754, C/G/K/O=1-268"/>
</dbReference>
<dbReference type="PDB" id="7VGA">
    <property type="method" value="EM"/>
    <property type="resolution" value="6.00 A"/>
    <property type="chains" value="A/D/G/J=816-1253, B/E/H/K=333-754, C/F/I/L=1-268"/>
</dbReference>
<dbReference type="PDB" id="7WC2">
    <property type="method" value="EM"/>
    <property type="resolution" value="3.50 A"/>
    <property type="chains" value="A/D/G/J=816-1253, B/E/H/K=333-754"/>
</dbReference>
<dbReference type="PDB" id="7WCO">
    <property type="method" value="EM"/>
    <property type="resolution" value="3.80 A"/>
    <property type="chains" value="J=816-1253, K=333-754, L=1-268"/>
</dbReference>
<dbReference type="PDBsum" id="7FD2"/>
<dbReference type="PDBsum" id="7V4T"/>
<dbReference type="PDBsum" id="7VGA"/>
<dbReference type="PDBsum" id="7WC2"/>
<dbReference type="PDBsum" id="7WCO"/>
<dbReference type="EMDB" id="EMD-31966"/>
<dbReference type="EMDB" id="EMD-32412"/>
<dbReference type="EMDB" id="EMD-32426"/>
<dbReference type="SMR" id="Q5Y388"/>
<dbReference type="MEROPS" id="S03.001"/>
<dbReference type="GeneID" id="5075853"/>
<dbReference type="KEGG" id="vg:5075853"/>
<dbReference type="Proteomes" id="UP000008625">
    <property type="component" value="Genome"/>
</dbReference>
<dbReference type="GO" id="GO:0030430">
    <property type="term" value="C:host cell cytoplasm"/>
    <property type="evidence" value="ECO:0007669"/>
    <property type="project" value="UniProtKB-SubCell"/>
</dbReference>
<dbReference type="GO" id="GO:0042025">
    <property type="term" value="C:host cell nucleus"/>
    <property type="evidence" value="ECO:0007669"/>
    <property type="project" value="UniProtKB-SubCell"/>
</dbReference>
<dbReference type="GO" id="GO:0020002">
    <property type="term" value="C:host cell plasma membrane"/>
    <property type="evidence" value="ECO:0007669"/>
    <property type="project" value="UniProtKB-SubCell"/>
</dbReference>
<dbReference type="GO" id="GO:0016020">
    <property type="term" value="C:membrane"/>
    <property type="evidence" value="ECO:0007669"/>
    <property type="project" value="UniProtKB-KW"/>
</dbReference>
<dbReference type="GO" id="GO:0039619">
    <property type="term" value="C:T=4 icosahedral viral capsid"/>
    <property type="evidence" value="ECO:0007669"/>
    <property type="project" value="UniProtKB-KW"/>
</dbReference>
<dbReference type="GO" id="GO:0055036">
    <property type="term" value="C:virion membrane"/>
    <property type="evidence" value="ECO:0007669"/>
    <property type="project" value="UniProtKB-SubCell"/>
</dbReference>
<dbReference type="GO" id="GO:0003723">
    <property type="term" value="F:RNA binding"/>
    <property type="evidence" value="ECO:0007669"/>
    <property type="project" value="UniProtKB-KW"/>
</dbReference>
<dbReference type="GO" id="GO:0004252">
    <property type="term" value="F:serine-type endopeptidase activity"/>
    <property type="evidence" value="ECO:0007669"/>
    <property type="project" value="InterPro"/>
</dbReference>
<dbReference type="GO" id="GO:0005198">
    <property type="term" value="F:structural molecule activity"/>
    <property type="evidence" value="ECO:0007669"/>
    <property type="project" value="InterPro"/>
</dbReference>
<dbReference type="GO" id="GO:0039654">
    <property type="term" value="P:fusion of virus membrane with host endosome membrane"/>
    <property type="evidence" value="ECO:0007669"/>
    <property type="project" value="UniProtKB-KW"/>
</dbReference>
<dbReference type="GO" id="GO:0006508">
    <property type="term" value="P:proteolysis"/>
    <property type="evidence" value="ECO:0007669"/>
    <property type="project" value="UniProtKB-KW"/>
</dbReference>
<dbReference type="GO" id="GO:0046718">
    <property type="term" value="P:symbiont entry into host cell"/>
    <property type="evidence" value="ECO:0007669"/>
    <property type="project" value="UniProtKB-KW"/>
</dbReference>
<dbReference type="GO" id="GO:0039722">
    <property type="term" value="P:symbiont-mediated suppression of host toll-like receptor signaling pathway"/>
    <property type="evidence" value="ECO:0000250"/>
    <property type="project" value="UniProtKB"/>
</dbReference>
<dbReference type="GO" id="GO:0019062">
    <property type="term" value="P:virion attachment to host cell"/>
    <property type="evidence" value="ECO:0007669"/>
    <property type="project" value="UniProtKB-KW"/>
</dbReference>
<dbReference type="FunFam" id="1.10.287.2230:FF:000001">
    <property type="entry name" value="Structural polyprotein"/>
    <property type="match status" value="1"/>
</dbReference>
<dbReference type="FunFam" id="2.40.10.10:FF:000076">
    <property type="entry name" value="Structural polyprotein"/>
    <property type="match status" value="1"/>
</dbReference>
<dbReference type="FunFam" id="2.60.98.10:FF:000002">
    <property type="entry name" value="Structural polyprotein"/>
    <property type="match status" value="1"/>
</dbReference>
<dbReference type="Gene3D" id="1.10.287.2230">
    <property type="match status" value="1"/>
</dbReference>
<dbReference type="Gene3D" id="2.60.40.350">
    <property type="match status" value="1"/>
</dbReference>
<dbReference type="Gene3D" id="2.60.40.3200">
    <property type="entry name" value="Alphavirus E2 glycoprotein, A domain"/>
    <property type="match status" value="1"/>
</dbReference>
<dbReference type="Gene3D" id="2.60.40.4310">
    <property type="entry name" value="Alphavirus E2 glycoprotein, domain B"/>
    <property type="match status" value="1"/>
</dbReference>
<dbReference type="Gene3D" id="2.60.40.2400">
    <property type="entry name" value="Alphavirus E2 glycoprotein, domain C"/>
    <property type="match status" value="1"/>
</dbReference>
<dbReference type="Gene3D" id="2.60.98.10">
    <property type="entry name" value="Tick-borne Encephalitis virus Glycoprotein, domain 1"/>
    <property type="match status" value="3"/>
</dbReference>
<dbReference type="Gene3D" id="2.40.10.10">
    <property type="entry name" value="Trypsin-like serine proteases"/>
    <property type="match status" value="2"/>
</dbReference>
<dbReference type="InterPro" id="IPR002548">
    <property type="entry name" value="Alpha_E1_glycop"/>
</dbReference>
<dbReference type="InterPro" id="IPR000936">
    <property type="entry name" value="Alpha_E2_glycop"/>
</dbReference>
<dbReference type="InterPro" id="IPR002533">
    <property type="entry name" value="Alpha_E3_glycop"/>
</dbReference>
<dbReference type="InterPro" id="IPR042304">
    <property type="entry name" value="Alphavir_E2_A"/>
</dbReference>
<dbReference type="InterPro" id="IPR042305">
    <property type="entry name" value="Alphavir_E2_B"/>
</dbReference>
<dbReference type="InterPro" id="IPR042306">
    <property type="entry name" value="Alphavir_E2_C"/>
</dbReference>
<dbReference type="InterPro" id="IPR000336">
    <property type="entry name" value="Flavivir/Alphavir_Ig-like_sf"/>
</dbReference>
<dbReference type="InterPro" id="IPR036253">
    <property type="entry name" value="Glycoprot_cen/dimer_sf"/>
</dbReference>
<dbReference type="InterPro" id="IPR038055">
    <property type="entry name" value="Glycoprot_E_dimer_dom"/>
</dbReference>
<dbReference type="InterPro" id="IPR014756">
    <property type="entry name" value="Ig_E-set"/>
</dbReference>
<dbReference type="InterPro" id="IPR009003">
    <property type="entry name" value="Peptidase_S1_PA"/>
</dbReference>
<dbReference type="InterPro" id="IPR043504">
    <property type="entry name" value="Peptidase_S1_PA_chymotrypsin"/>
</dbReference>
<dbReference type="InterPro" id="IPR000930">
    <property type="entry name" value="Peptidase_S3"/>
</dbReference>
<dbReference type="Pfam" id="PF01589">
    <property type="entry name" value="Alpha_E1_glycop"/>
    <property type="match status" value="1"/>
</dbReference>
<dbReference type="Pfam" id="PF00943">
    <property type="entry name" value="Alpha_E2_glycop"/>
    <property type="match status" value="1"/>
</dbReference>
<dbReference type="Pfam" id="PF01563">
    <property type="entry name" value="Alpha_E3_glycop"/>
    <property type="match status" value="1"/>
</dbReference>
<dbReference type="Pfam" id="PF00944">
    <property type="entry name" value="Peptidase_S3"/>
    <property type="match status" value="1"/>
</dbReference>
<dbReference type="PRINTS" id="PR00798">
    <property type="entry name" value="TOGAVIRIN"/>
</dbReference>
<dbReference type="SUPFAM" id="SSF81296">
    <property type="entry name" value="E set domains"/>
    <property type="match status" value="1"/>
</dbReference>
<dbReference type="SUPFAM" id="SSF50494">
    <property type="entry name" value="Trypsin-like serine proteases"/>
    <property type="match status" value="1"/>
</dbReference>
<dbReference type="SUPFAM" id="SSF56983">
    <property type="entry name" value="Viral glycoprotein, central and dimerisation domains"/>
    <property type="match status" value="1"/>
</dbReference>
<dbReference type="PROSITE" id="PS51690">
    <property type="entry name" value="ALPHAVIRUS_CP"/>
    <property type="match status" value="1"/>
</dbReference>
<reference key="1">
    <citation type="submission" date="2001-01" db="EMBL/GenBank/DDBJ databases">
        <title>Nucleotide sequence analyses of the 26S mRNAs of viruses of the genus Alphavirus.</title>
        <authorList>
            <person name="Kinney R.M."/>
            <person name="Pfeffer M."/>
        </authorList>
    </citation>
    <scope>NUCLEOTIDE SEQUENCE [GENOMIC RNA]</scope>
    <source>
        <strain>Isolate MM 2021</strain>
    </source>
</reference>
<reference key="2">
    <citation type="submission" date="2004-07" db="EMBL/GenBank/DDBJ databases">
        <title>Complete genome sequence of Getahvirus.</title>
        <authorList>
            <person name="Kim C.-J."/>
            <person name="Lee J.-Y."/>
            <person name="Cruz D.J.M."/>
        </authorList>
    </citation>
    <scope>NUCLEOTIDE SEQUENCE [GENOMIC RNA]</scope>
</reference>
<reference key="3">
    <citation type="submission" date="2017-08" db="EMBL/GenBank/DDBJ databases">
        <title>Getah virus infection in pigs, Hunan, China, 2017.</title>
        <authorList>
            <person name="Yang T."/>
            <person name="Yu X."/>
        </authorList>
    </citation>
    <scope>NUCLEOTIDE SEQUENCE [GENOMIC RNA]</scope>
    <source>
        <strain>HuN1</strain>
    </source>
</reference>
<reference key="4">
    <citation type="journal article" date="2024" name="Nat. Commun.">
        <title>LDLR is used as a cell entry receptor by multiple alphaviruses.</title>
        <authorList>
            <person name="Zhai X."/>
            <person name="Li X."/>
            <person name="Veit M."/>
            <person name="Wang N."/>
            <person name="Wang Y."/>
            <person name="Merits A."/>
            <person name="Jiang Z."/>
            <person name="Qin Y."/>
            <person name="Zhang X."/>
            <person name="Qi K."/>
            <person name="Jiao H."/>
            <person name="He W.T."/>
            <person name="Chen Y."/>
            <person name="Mao Y."/>
            <person name="Su S."/>
        </authorList>
    </citation>
    <scope>FUNCTION (SPIKE GLYCOPROTEIN E2)</scope>
    <scope>INTERACTION WITH HOST LDLR (SPIKE GLYCOPROTEIN E1)</scope>
    <scope>INTERACTION WITH HOST LDLR (SPIKE GLYCOPROTEIN E2)</scope>
</reference>
<reference key="5">
    <citation type="journal article" date="2023" name="J. Med. Virol.">
        <title>The roles of 6K protein on Getah virus replication and pathogenicity.</title>
        <authorList>
            <person name="Meng H."/>
            <person name="Mou C."/>
            <person name="Zhang L."/>
            <person name="Zhou J."/>
            <person name="Lu T."/>
            <person name="Chen Z."/>
        </authorList>
    </citation>
    <scope>FUNCTION (6K PROTEIN)</scope>
    <source>
        <strain>HuN1</strain>
    </source>
</reference>
<reference evidence="20" key="6">
    <citation type="journal article" date="2022" name="Cell Discov.">
        <title>Structure of infective Getah virus at 2.8 A resolution determined by cryo-electron microscopy.</title>
        <authorList>
            <person name="Wang A."/>
            <person name="Zhou F."/>
            <person name="Liu C."/>
            <person name="Gao D."/>
            <person name="Qi R."/>
            <person name="Yin Y."/>
            <person name="Liu S."/>
            <person name="Gao Y."/>
            <person name="Fu L."/>
            <person name="Xia Y."/>
            <person name="Xu Y."/>
            <person name="Wang C."/>
            <person name="Liu Z."/>
        </authorList>
    </citation>
    <scope>STRUCTURE BY ELECTRON MICROSCOPY (2.80 ANGSTROMS) OF 816-1253</scope>
    <scope>FUNCTION (CAPSID PROTEIN)</scope>
    <scope>SUBUNIT (SPIKE GLYCOPROTEIN E1)</scope>
    <scope>SUBUNIT (SPIKE GLYCOPROTEIN E2)</scope>
    <scope>INTERACTION WITH SPIKE GLYCOPROTEIN E2 (SPIKE GLYCOPROTEIN E1)</scope>
    <scope>INTERACTION WITH SPIKE GLYCOPROTEIN E1 (SPIKE GLYCOPROTEIN E2)</scope>
    <scope>GLYCOSYLATION AT ASN-532; ASN-594; ASN-956 AND ASN-1085</scope>
    <scope>STEAROYLATION AT CYS-717 AND CYS-727</scope>
    <scope>PALMITOYLATION AT CYS-747; CYS-748 AND CYS-1248</scope>
    <scope>DISULFIDE BONDS</scope>
</reference>
<organismHost>
    <name type="scientific">Aedes vexans</name>
    <name type="common">Inland floodwater mosquito</name>
    <name type="synonym">Culex vexans</name>
    <dbReference type="NCBI Taxonomy" id="7163"/>
</organismHost>
<organismHost>
    <name type="scientific">Culex tritaeniorhynchus</name>
    <name type="common">Mosquito</name>
    <dbReference type="NCBI Taxonomy" id="7178"/>
</organismHost>
<organismHost>
    <name type="scientific">Equus caballus</name>
    <name type="common">Horse</name>
    <dbReference type="NCBI Taxonomy" id="9796"/>
</organismHost>
<organismHost>
    <name type="scientific">Homo sapiens</name>
    <name type="common">Human</name>
    <dbReference type="NCBI Taxonomy" id="9606"/>
</organismHost>
<organismHost>
    <name type="scientific">Sus scrofa</name>
    <name type="common">Pig</name>
    <dbReference type="NCBI Taxonomy" id="9823"/>
</organismHost>
<organismHost>
    <name type="scientific">Vulpes vulpes</name>
    <name type="common">Red fox</name>
    <dbReference type="NCBI Taxonomy" id="9627"/>
</organismHost>
<accession>Q5Y388</accession>
<accession>A0A291S763</accession>
<accession>Q80S31</accession>
<keyword id="KW-0002">3D-structure</keyword>
<keyword id="KW-0167">Capsid protein</keyword>
<keyword id="KW-0165">Cleavage on pair of basic residues</keyword>
<keyword id="KW-1015">Disulfide bond</keyword>
<keyword id="KW-1170">Fusion of virus membrane with host endosomal membrane</keyword>
<keyword id="KW-1168">Fusion of virus membrane with host membrane</keyword>
<keyword id="KW-0325">Glycoprotein</keyword>
<keyword id="KW-1032">Host cell membrane</keyword>
<keyword id="KW-1035">Host cytoplasm</keyword>
<keyword id="KW-1038">Host endoplasmic reticulum</keyword>
<keyword id="KW-1040">Host Golgi apparatus</keyword>
<keyword id="KW-1043">Host membrane</keyword>
<keyword id="KW-1048">Host nucleus</keyword>
<keyword id="KW-0945">Host-virus interaction</keyword>
<keyword id="KW-0378">Hydrolase</keyword>
<keyword id="KW-0407">Ion channel</keyword>
<keyword id="KW-0406">Ion transport</keyword>
<keyword id="KW-0449">Lipoprotein</keyword>
<keyword id="KW-0472">Membrane</keyword>
<keyword id="KW-0564">Palmitate</keyword>
<keyword id="KW-0645">Protease</keyword>
<keyword id="KW-0694">RNA-binding</keyword>
<keyword id="KW-0720">Serine protease</keyword>
<keyword id="KW-1144">T=4 icosahedral capsid protein</keyword>
<keyword id="KW-0812">Transmembrane</keyword>
<keyword id="KW-1133">Transmembrane helix</keyword>
<keyword id="KW-0813">Transport</keyword>
<keyword id="KW-1161">Viral attachment to host cell</keyword>
<keyword id="KW-1234">Viral attachment to host entry receptor</keyword>
<keyword id="KW-1182">Viral ion channel</keyword>
<keyword id="KW-1162">Viral penetration into host cytoplasm</keyword>
<keyword id="KW-0946">Virion</keyword>
<keyword id="KW-1160">Virus entry into host cell</keyword>
<organism>
    <name type="scientific">Getah virus</name>
    <name type="common">GETV</name>
    <dbReference type="NCBI Taxonomy" id="59300"/>
    <lineage>
        <taxon>Viruses</taxon>
        <taxon>Riboviria</taxon>
        <taxon>Orthornavirae</taxon>
        <taxon>Kitrinoviricota</taxon>
        <taxon>Alsuviricetes</taxon>
        <taxon>Martellivirales</taxon>
        <taxon>Togaviridae</taxon>
        <taxon>Alphavirus</taxon>
    </lineage>
</organism>
<protein>
    <recommendedName>
        <fullName>Structural polyprotein</fullName>
    </recommendedName>
    <alternativeName>
        <fullName>p130</fullName>
    </alternativeName>
    <component>
        <recommendedName>
            <fullName>Capsid protein</fullName>
            <ecNumber evidence="2">3.4.21.90</ecNumber>
        </recommendedName>
        <alternativeName>
            <fullName>Coat protein</fullName>
            <shortName>C</shortName>
        </alternativeName>
    </component>
    <component>
        <recommendedName>
            <fullName>Precursor of protein E3/E2</fullName>
        </recommendedName>
        <alternativeName>
            <fullName>p62</fullName>
        </alternativeName>
        <alternativeName>
            <fullName>pE2</fullName>
        </alternativeName>
    </component>
    <component>
        <recommendedName>
            <fullName>Assembly protein E3</fullName>
        </recommendedName>
    </component>
    <component>
        <recommendedName>
            <fullName>Spike glycoprotein E2</fullName>
        </recommendedName>
        <alternativeName>
            <fullName>E2 envelope glycoprotein</fullName>
        </alternativeName>
    </component>
    <component>
        <recommendedName>
            <fullName>6K protein</fullName>
        </recommendedName>
    </component>
    <component>
        <recommendedName>
            <fullName>Spike glycoprotein E1</fullName>
        </recommendedName>
        <alternativeName>
            <fullName>E1 envelope glycoprotein</fullName>
        </alternativeName>
    </component>
</protein>
<name>POLS_GETV</name>
<sequence>MNYIPTQTFYGRRWRPRPAYRPWRVPMQPAPPMVIPELQTPIVQAQQMQQLISAVSALTTKQNGKAPKKPKKKPQKAKAKKNEQQKKNENKKPPPKQKNPAKKKKPGKRERMCMKIENDCIFEVKLDGKVTGYACLVGDKVMKPAHVKGVIDNPDLAKLTYKKSSKYDLECAQIPVHMKSDASKYTHEKPEGHYNWHHGAVQYSGGRFTIPTGAGKPGDSGRPIFDNKGRVVAIVLGGANEGARTALSVVTWTKDMVTRYTPEGTEEWSAALMMCVLANVTFPCSEPACAPCCYEKQPEQTLRMLEDNVDRPGYYDLLEATMTCNNSARHRRSVTKHFNVYKATKPYLAYCADCGDGQFCYSPVAIEKIRDEASDGMIKIQVAAQIGINKGGTHEHNKIRYIAGHDMKEANRDSLQVHTSGVCAIRGTMGHFIVAYCPPGDELKVQFQDAESHTQACKVQYKHAPAPVGREKFTVRPHFGIEVPCTTYQLTTAPTEEEIDMHTPPDIPDITLLSQQSGNVKITAGGKTIRYNCTCGSGNVGTTSSDKTINSCKIAQCHAAVTNHDKWQYTSSFVPRADQLSRKGKVHVPFPLTNSTCRVPVARAPGVTYGKRELTVKLHPDHPTLLTYRSLGADPRPYEEWIDRYVERTIPVTEDGIEYRWGNNPPVRLWAQLTTEGKPHGWPHEIILYYYGLYPAATIAAVSAAGLAVVLSLLASCYMFATARRKCLTPYALTPGAVVPVTLGVLCCAPRAHAASFAESMAYLWDENQTLFWLELATPLAAIIILVCCLKNLLCCCKPLSFLVLVSLGTPVVKSYEHTATIPNVVGFPYKAHIERNGFSPMTLQLEVLGTSLEPTLNLEYITCEYKTVVPSPYIKCCGTSECRSMERPDYQCQVYTGVYPFMWGGAYCFCDTENTQLSEAYVDRSDVCKHDHAAAYKAHTAAMKATIRISYGNLNQTTTAFVNGEHTVTVGGSRFTFGPISTAWTPFDNKIVVYKNDVYNQDFPPYGSGQPGRFGDIQSRTVESKDLYANTALKLSRPSSGTVHVPYTQTPSGFKYWIKERGTSLNDKAPFGCVIKTNPVRAENCAVGNIPVSMDIPDTAFTRVIDAPAVTNLECQVAVCTHSSDFGGIATLTFKTDKPGKCAVHSHSNVATIQEAAVDIKTDGKITLHFSTASASPAFKVSVCSAKTTCMAACEPPKDHIVPYGASHNNQVFPDMSGTAMTWVQRVAGGLGGLTLAAVAVLILVTCVTMRR</sequence>
<evidence type="ECO:0000250" key="1"/>
<evidence type="ECO:0000250" key="2">
    <source>
        <dbReference type="UniProtKB" id="P03315"/>
    </source>
</evidence>
<evidence type="ECO:0000250" key="3">
    <source>
        <dbReference type="UniProtKB" id="P03316"/>
    </source>
</evidence>
<evidence type="ECO:0000250" key="4">
    <source>
        <dbReference type="UniProtKB" id="P08491"/>
    </source>
</evidence>
<evidence type="ECO:0000250" key="5">
    <source>
        <dbReference type="UniProtKB" id="P09592"/>
    </source>
</evidence>
<evidence type="ECO:0000250" key="6">
    <source>
        <dbReference type="UniProtKB" id="P0DOK1"/>
    </source>
</evidence>
<evidence type="ECO:0000250" key="7">
    <source>
        <dbReference type="UniProtKB" id="P27284"/>
    </source>
</evidence>
<evidence type="ECO:0000250" key="8">
    <source>
        <dbReference type="UniProtKB" id="P89946"/>
    </source>
</evidence>
<evidence type="ECO:0000250" key="9">
    <source>
        <dbReference type="UniProtKB" id="Q5XXP3"/>
    </source>
</evidence>
<evidence type="ECO:0000250" key="10">
    <source>
        <dbReference type="UniProtKB" id="Q86925"/>
    </source>
</evidence>
<evidence type="ECO:0000250" key="11">
    <source>
        <dbReference type="UniProtKB" id="Q8JUX5"/>
    </source>
</evidence>
<evidence type="ECO:0000255" key="12"/>
<evidence type="ECO:0000255" key="13">
    <source>
        <dbReference type="PROSITE-ProRule" id="PRU01027"/>
    </source>
</evidence>
<evidence type="ECO:0000256" key="14">
    <source>
        <dbReference type="SAM" id="MobiDB-lite"/>
    </source>
</evidence>
<evidence type="ECO:0000269" key="15">
    <source>
    </source>
</evidence>
<evidence type="ECO:0000269" key="16">
    <source>
    </source>
</evidence>
<evidence type="ECO:0000269" key="17">
    <source>
    </source>
</evidence>
<evidence type="ECO:0000269" key="18">
    <source ref="3"/>
</evidence>
<evidence type="ECO:0000305" key="19"/>
<evidence type="ECO:0007744" key="20">
    <source>
        <dbReference type="PDB" id="7FD2"/>
    </source>
</evidence>
<evidence type="ECO:0007744" key="21">
    <source>
        <dbReference type="PDB" id="7V4T"/>
    </source>
</evidence>
<evidence type="ECO:0007744" key="22">
    <source>
        <dbReference type="PDB" id="7WC2"/>
    </source>
</evidence>
<evidence type="ECO:0007829" key="23">
    <source>
        <dbReference type="PDB" id="7FD2"/>
    </source>
</evidence>
<feature type="chain" id="PRO_0000238736" description="Capsid protein" evidence="1">
    <location>
        <begin position="1"/>
        <end position="268"/>
    </location>
</feature>
<feature type="chain" id="PRO_0000238737" description="Precursor of protein E3/E2" evidence="1">
    <location>
        <begin position="269"/>
        <end position="754"/>
    </location>
</feature>
<feature type="chain" id="PRO_0000238738" description="Assembly protein E3" evidence="1">
    <location>
        <begin position="269"/>
        <end position="332"/>
    </location>
</feature>
<feature type="chain" id="PRO_0000238739" description="Spike glycoprotein E2" evidence="1">
    <location>
        <begin position="333"/>
        <end position="754"/>
    </location>
</feature>
<feature type="chain" id="PRO_0000238740" description="6K protein" evidence="1">
    <location>
        <begin position="755"/>
        <end position="815"/>
    </location>
</feature>
<feature type="chain" id="PRO_0000238741" description="Spike glycoprotein E1" evidence="1">
    <location>
        <begin position="816"/>
        <end position="1253"/>
    </location>
</feature>
<feature type="topological domain" description="Extracellular" evidence="12">
    <location>
        <begin position="333"/>
        <end position="694"/>
    </location>
</feature>
<feature type="transmembrane region" description="Helical" evidence="12">
    <location>
        <begin position="695"/>
        <end position="715"/>
    </location>
</feature>
<feature type="topological domain" description="Cytoplasmic" evidence="12">
    <location>
        <begin position="716"/>
        <end position="754"/>
    </location>
</feature>
<feature type="topological domain" description="Extracellular" evidence="12">
    <location>
        <begin position="755"/>
        <end position="769"/>
    </location>
</feature>
<feature type="transmembrane region" description="Helical" evidence="12">
    <location>
        <begin position="770"/>
        <end position="790"/>
    </location>
</feature>
<feature type="topological domain" description="Cytoplasmic" evidence="12">
    <location>
        <begin position="791"/>
        <end position="792"/>
    </location>
</feature>
<feature type="transmembrane region" description="Helical" evidence="12">
    <location>
        <begin position="793"/>
        <end position="813"/>
    </location>
</feature>
<feature type="topological domain" description="Extracellular" evidence="12">
    <location>
        <begin position="814"/>
        <end position="815"/>
    </location>
</feature>
<feature type="topological domain" description="Extracellular" evidence="12">
    <location>
        <begin position="826"/>
        <end position="1227"/>
    </location>
</feature>
<feature type="transmembrane region" description="Helical" evidence="12">
    <location>
        <begin position="1228"/>
        <end position="1248"/>
    </location>
</feature>
<feature type="topological domain" description="Cytoplasmic" evidence="12">
    <location>
        <begin position="1249"/>
        <end position="1253"/>
    </location>
</feature>
<feature type="domain" description="Peptidase S3" evidence="13">
    <location>
        <begin position="120"/>
        <end position="268"/>
    </location>
</feature>
<feature type="region of interest" description="Host transcription inhibition" evidence="5">
    <location>
        <begin position="43"/>
        <end position="77"/>
    </location>
</feature>
<feature type="region of interest" description="Disordered" evidence="14">
    <location>
        <begin position="58"/>
        <end position="110"/>
    </location>
</feature>
<feature type="region of interest" description="Binding to the viral RNA" evidence="7">
    <location>
        <begin position="90"/>
        <end position="121"/>
    </location>
</feature>
<feature type="region of interest" description="Ribosome-binding" evidence="7">
    <location>
        <begin position="106"/>
        <end position="120"/>
    </location>
</feature>
<feature type="region of interest" description="Interaction with spike glycoprotein E2" evidence="3">
    <location>
        <begin position="162"/>
        <end position="167"/>
    </location>
</feature>
<feature type="region of interest" description="Dimerization of the capsid protein" evidence="6">
    <location>
        <begin position="190"/>
        <end position="200"/>
    </location>
</feature>
<feature type="region of interest" description="Dimerization of the capsid protein" evidence="6">
    <location>
        <begin position="226"/>
        <end position="230"/>
    </location>
</feature>
<feature type="region of interest" description="Functions as an uncleaved signal peptide for the precursor of protein E3/E2" evidence="2">
    <location>
        <begin position="269"/>
        <end position="280"/>
    </location>
</feature>
<feature type="region of interest" description="Interaction with host Mxra8 receptor" evidence="4">
    <location>
        <begin position="358"/>
        <end position="361"/>
    </location>
</feature>
<feature type="region of interest" description="Interaction with host Mxra8 receptor" evidence="4">
    <location>
        <begin position="394"/>
        <end position="396"/>
    </location>
</feature>
<feature type="region of interest" description="Interaction with host Mxra8 receptor" evidence="4">
    <location>
        <begin position="516"/>
        <end position="519"/>
    </location>
</feature>
<feature type="region of interest" description="Interaction with host Mxra8 receptor" evidence="4">
    <location>
        <begin position="548"/>
        <end position="554"/>
    </location>
</feature>
<feature type="region of interest" description="Interaction with the capsid protein" evidence="3">
    <location>
        <begin position="722"/>
        <end position="726"/>
    </location>
</feature>
<feature type="region of interest" description="Transient transmembrane before p62-6K protein processing" evidence="12">
    <location>
        <begin position="727"/>
        <end position="747"/>
    </location>
</feature>
<feature type="region of interest" description="E1 fusion peptide loop" evidence="11">
    <location>
        <begin position="899"/>
        <end position="916"/>
    </location>
</feature>
<feature type="short sequence motif" description="Nuclear localization signal" evidence="5">
    <location>
        <begin position="70"/>
        <end position="106"/>
    </location>
</feature>
<feature type="short sequence motif" description="Nuclear export signal" evidence="5">
    <location>
        <begin position="151"/>
        <end position="161"/>
    </location>
</feature>
<feature type="compositionally biased region" description="Basic residues" evidence="14">
    <location>
        <begin position="66"/>
        <end position="79"/>
    </location>
</feature>
<feature type="compositionally biased region" description="Basic and acidic residues" evidence="14">
    <location>
        <begin position="80"/>
        <end position="92"/>
    </location>
</feature>
<feature type="compositionally biased region" description="Basic residues" evidence="14">
    <location>
        <begin position="93"/>
        <end position="108"/>
    </location>
</feature>
<feature type="active site" description="Charge relay system" evidence="13">
    <location>
        <position position="146"/>
    </location>
</feature>
<feature type="active site" description="Charge relay system" evidence="13">
    <location>
        <position position="168"/>
    </location>
</feature>
<feature type="active site" description="Charge relay system" evidence="13">
    <location>
        <position position="220"/>
    </location>
</feature>
<feature type="site" description="Involved in dimerization of the capsid protein" evidence="10">
    <location>
        <position position="194"/>
    </location>
</feature>
<feature type="site" description="Involved in dimerization of the capsid protein" evidence="10">
    <location>
        <position position="227"/>
    </location>
</feature>
<feature type="site" description="Cleavage; by autolysis" evidence="2">
    <location>
        <begin position="268"/>
        <end position="269"/>
    </location>
</feature>
<feature type="site" description="Cleavage; by host furin" evidence="2">
    <location>
        <begin position="332"/>
        <end position="333"/>
    </location>
</feature>
<feature type="site" description="Cleavage; by host signal peptidase" evidence="2">
    <location>
        <begin position="754"/>
        <end position="755"/>
    </location>
</feature>
<feature type="site" description="Cleavage; by host signal peptidase" evidence="2">
    <location>
        <begin position="815"/>
        <end position="816"/>
    </location>
</feature>
<feature type="lipid moiety-binding region" description="S-stearoyl cysteine; by host" evidence="15">
    <location>
        <position position="717"/>
    </location>
</feature>
<feature type="lipid moiety-binding region" description="S-stearoyl cysteine; by host" evidence="15">
    <location>
        <position position="727"/>
    </location>
</feature>
<feature type="lipid moiety-binding region" description="S-palmitoyl cysteine; by host" evidence="15">
    <location>
        <position position="747"/>
    </location>
</feature>
<feature type="lipid moiety-binding region" description="S-palmitoyl cysteine; by host" evidence="15">
    <location>
        <position position="748"/>
    </location>
</feature>
<feature type="lipid moiety-binding region" description="S-palmitoyl cysteine; by host" evidence="15">
    <location>
        <position position="1248"/>
    </location>
</feature>
<feature type="glycosylation site" description="N-linked (GlcNAc...) asparagine; by host" evidence="12">
    <location>
        <position position="279"/>
    </location>
</feature>
<feature type="glycosylation site" description="N-linked (GlcNAc...) asparagine; by host" evidence="12">
    <location>
        <position position="325"/>
    </location>
</feature>
<feature type="glycosylation site" description="N-linked (GlcNAc...) asparagine; by host" evidence="15">
    <location>
        <position position="532"/>
    </location>
</feature>
<feature type="glycosylation site" description="N-linked (GlcNAc...) asparagine; by host" evidence="15">
    <location>
        <position position="594"/>
    </location>
</feature>
<feature type="glycosylation site" description="N-linked (GlcNAc...) asparagine; by host" evidence="12">
    <location>
        <position position="768"/>
    </location>
</feature>
<feature type="glycosylation site" description="N-linked (GlcNAc...) asparagine; by host" evidence="15">
    <location>
        <position position="956"/>
    </location>
</feature>
<feature type="glycosylation site" description="N-linked (GlcNAc...) asparagine; by host" evidence="15">
    <location>
        <position position="1085"/>
    </location>
</feature>
<feature type="disulfide bond" evidence="2">
    <location>
        <begin position="120"/>
        <end position="135"/>
    </location>
</feature>
<feature type="disulfide bond" evidence="9">
    <location>
        <begin position="275"/>
        <end position="284"/>
    </location>
</feature>
<feature type="disulfide bond" evidence="9">
    <location>
        <begin position="289"/>
        <end position="293"/>
    </location>
</feature>
<feature type="disulfide bond" evidence="9">
    <location>
        <begin position="292"/>
        <end position="324"/>
    </location>
</feature>
<feature type="disulfide bond" evidence="8">
    <location>
        <begin position="351"/>
        <end position="457"/>
    </location>
</feature>
<feature type="disulfide bond" evidence="8">
    <location>
        <begin position="354"/>
        <end position="360"/>
    </location>
</feature>
<feature type="disulfide bond" evidence="8">
    <location>
        <begin position="423"/>
        <end position="437"/>
    </location>
</feature>
<feature type="disulfide bond" evidence="9">
    <location>
        <begin position="485"/>
        <end position="597"/>
    </location>
</feature>
<feature type="disulfide bond" evidence="9">
    <location>
        <begin position="533"/>
        <end position="557"/>
    </location>
</feature>
<feature type="disulfide bond" evidence="9">
    <location>
        <begin position="535"/>
        <end position="552"/>
    </location>
</feature>
<feature type="disulfide bond" evidence="9">
    <location>
        <begin position="727"/>
        <end position="748"/>
    </location>
</feature>
<feature type="disulfide bond" evidence="15 20 22">
    <location>
        <begin position="864"/>
        <end position="929"/>
    </location>
</feature>
<feature type="disulfide bond" evidence="15 20 22">
    <location>
        <begin position="877"/>
        <end position="909"/>
    </location>
</feature>
<feature type="disulfide bond" evidence="15 20 22">
    <location>
        <begin position="878"/>
        <end position="911"/>
    </location>
</feature>
<feature type="disulfide bond" evidence="2">
    <location>
        <begin position="883"/>
        <end position="893"/>
    </location>
</feature>
<feature type="disulfide bond" evidence="15 20 21">
    <location>
        <begin position="1074"/>
        <end position="1086"/>
    </location>
</feature>
<feature type="disulfide bond" evidence="15 20 21 22">
    <location>
        <begin position="1116"/>
        <end position="1191"/>
    </location>
</feature>
<feature type="disulfide bond" evidence="15 20 21 22">
    <location>
        <begin position="1121"/>
        <end position="1195"/>
    </location>
</feature>
<feature type="disulfide bond" evidence="15 20 21 22">
    <location>
        <begin position="1143"/>
        <end position="1185"/>
    </location>
</feature>
<feature type="sequence variant" description="In strain: Isolate MM 2021.">
    <original>T</original>
    <variation>S</variation>
    <location>
        <position position="6"/>
    </location>
</feature>
<feature type="sequence variant" description="In strain: Isolate MM 2021.">
    <original>Y</original>
    <variation>F</variation>
    <location>
        <position position="20"/>
    </location>
</feature>
<feature type="sequence variant" description="In strain: Isolate MM 2021.">
    <original>M</original>
    <variation>L</variation>
    <location>
        <position position="27"/>
    </location>
</feature>
<feature type="sequence variant" description="In strain: Isolate MM 2021.">
    <original>V</original>
    <variation>M</variation>
    <location>
        <position position="34"/>
    </location>
</feature>
<feature type="sequence variant" description="In strain: Isolate MM 2021.">
    <original>P</original>
    <variation>S</variation>
    <location>
        <position position="70"/>
    </location>
</feature>
<feature type="sequence variant" description="In strain: Isolate MM 2021.">
    <original>AKA</original>
    <variation>TKT</variation>
    <location>
        <begin position="77"/>
        <end position="79"/>
    </location>
</feature>
<feature type="sequence variant" description="In strain: Isolate MM 2021." evidence="18">
    <original>K</original>
    <variation>E</variation>
    <location>
        <position position="336"/>
    </location>
</feature>
<feature type="sequence variant" description="In strain: Isolate MM 2021.">
    <original>F</original>
    <variation>S</variation>
    <location>
        <position position="359"/>
    </location>
</feature>
<feature type="sequence variant" description="In strain: HuN1." evidence="18">
    <original>V</original>
    <variation>I</variation>
    <location>
        <position position="382"/>
    </location>
</feature>
<feature type="sequence variant" description="In strain: Isolate MM 2021.">
    <original>V</original>
    <variation>T</variation>
    <location>
        <position position="422"/>
    </location>
</feature>
<feature type="sequence variant" description="In strain: Isolate MM 2021.">
    <original>V</original>
    <variation>A</variation>
    <location>
        <position position="434"/>
    </location>
</feature>
<feature type="sequence variant" description="In strain: Isolate MM 2021.">
    <original>T</original>
    <variation>I</variation>
    <location>
        <position position="454"/>
    </location>
</feature>
<feature type="sequence variant" description="In strain: HuN1." evidence="18">
    <original>N</original>
    <variation>H</variation>
    <location>
        <position position="539"/>
    </location>
</feature>
<feature type="sequence variant" description="In strain: Isolate MM 2021.">
    <original>S</original>
    <variation>R</variation>
    <location>
        <position position="545"/>
    </location>
</feature>
<feature type="sequence variant" description="In strain: Isolate MM 2021.">
    <original>N</original>
    <variation>D</variation>
    <location>
        <position position="594"/>
    </location>
</feature>
<feature type="sequence variant" description="In strain: Isolate MM 2021.">
    <original>V</original>
    <variation>L</variation>
    <location>
        <position position="601"/>
    </location>
</feature>
<feature type="sequence variant" description="In strain: Isolate MM 2021.">
    <original>V</original>
    <variation>A</variation>
    <location>
        <position position="646"/>
    </location>
</feature>
<feature type="sequence variant" description="In strain: Isolate MM 2021.">
    <original>D</original>
    <variation>E</variation>
    <location>
        <position position="655"/>
    </location>
</feature>
<feature type="sequence variant" description="In strain: HuN1." evidence="18">
    <original>VV</original>
    <variation>AI</variation>
    <location>
        <begin position="709"/>
        <end position="710"/>
    </location>
</feature>
<feature type="sequence variant" description="In strain: Isolate MM 2021.">
    <original>V</original>
    <variation>I</variation>
    <location>
        <position position="738"/>
    </location>
</feature>
<feature type="sequence variant" description="In strain: HuN1." evidence="18">
    <original>V</original>
    <variation>I</variation>
    <location>
        <position position="739"/>
    </location>
</feature>
<feature type="sequence variant" description="In strain: Isolate MM 2021.">
    <original>M</original>
    <variation>K</variation>
    <location>
        <position position="886"/>
    </location>
</feature>
<feature type="sequence variant" description="In strain: Isolate MM 2021.">
    <original>T</original>
    <variation>N</variation>
    <location>
        <position position="970"/>
    </location>
</feature>
<feature type="sequence variant" description="In strain: Isolate MM 2021.">
    <original>V</original>
    <variation>A</variation>
    <location>
        <position position="993"/>
    </location>
</feature>
<feature type="sequence variant" description="In strain: Isolate MM 2021.">
    <original>V</original>
    <variation>I</variation>
    <location>
        <position position="1075"/>
    </location>
</feature>
<feature type="sequence variant" description="In strain: Isolate MM 2021.">
    <original>T</original>
    <variation>S</variation>
    <location>
        <position position="1100"/>
    </location>
</feature>
<feature type="sequence variant" description="In strain: HuN1." evidence="18">
    <original>D</original>
    <variation>N</variation>
    <location>
        <position position="1138"/>
    </location>
</feature>
<feature type="sequence variant" description="In strain: Isolate MM 2021.">
    <original>M</original>
    <variation>T</variation>
    <location>
        <position position="1192"/>
    </location>
</feature>
<feature type="helix" evidence="23">
    <location>
        <begin position="112"/>
        <end position="120"/>
    </location>
</feature>
<feature type="strand" evidence="23">
    <location>
        <begin position="121"/>
        <end position="126"/>
    </location>
</feature>
<feature type="strand" evidence="23">
    <location>
        <begin position="129"/>
        <end position="137"/>
    </location>
</feature>
<feature type="strand" evidence="23">
    <location>
        <begin position="149"/>
        <end position="153"/>
    </location>
</feature>
<feature type="helix" evidence="23">
    <location>
        <begin position="154"/>
        <end position="157"/>
    </location>
</feature>
<feature type="turn" evidence="23">
    <location>
        <begin position="165"/>
        <end position="168"/>
    </location>
</feature>
<feature type="helix" evidence="23">
    <location>
        <begin position="176"/>
        <end position="178"/>
    </location>
</feature>
<feature type="strand" evidence="23">
    <location>
        <begin position="191"/>
        <end position="195"/>
    </location>
</feature>
<feature type="strand" evidence="23">
    <location>
        <begin position="197"/>
        <end position="204"/>
    </location>
</feature>
<feature type="strand" evidence="23">
    <location>
        <begin position="207"/>
        <end position="211"/>
    </location>
</feature>
<feature type="strand" evidence="23">
    <location>
        <begin position="223"/>
        <end position="225"/>
    </location>
</feature>
<feature type="strand" evidence="23">
    <location>
        <begin position="231"/>
        <end position="235"/>
    </location>
</feature>
<feature type="strand" evidence="23">
    <location>
        <begin position="244"/>
        <end position="247"/>
    </location>
</feature>
<feature type="strand" evidence="23">
    <location>
        <begin position="249"/>
        <end position="252"/>
    </location>
</feature>
<feature type="strand" evidence="23">
    <location>
        <begin position="257"/>
        <end position="260"/>
    </location>
</feature>
<feature type="helix" evidence="23">
    <location>
        <begin position="335"/>
        <end position="338"/>
    </location>
</feature>
<feature type="turn" evidence="23">
    <location>
        <begin position="339"/>
        <end position="343"/>
    </location>
</feature>
<feature type="strand" evidence="23">
    <location>
        <begin position="349"/>
        <end position="352"/>
    </location>
</feature>
<feature type="strand" evidence="23">
    <location>
        <begin position="354"/>
        <end position="358"/>
    </location>
</feature>
<feature type="strand" evidence="23">
    <location>
        <begin position="360"/>
        <end position="362"/>
    </location>
</feature>
<feature type="strand" evidence="23">
    <location>
        <begin position="376"/>
        <end position="388"/>
    </location>
</feature>
<feature type="strand" evidence="23">
    <location>
        <begin position="390"/>
        <end position="392"/>
    </location>
</feature>
<feature type="strand" evidence="23">
    <location>
        <begin position="394"/>
        <end position="403"/>
    </location>
</feature>
<feature type="strand" evidence="23">
    <location>
        <begin position="406"/>
        <end position="411"/>
    </location>
</feature>
<feature type="helix" evidence="23">
    <location>
        <begin position="412"/>
        <end position="414"/>
    </location>
</feature>
<feature type="strand" evidence="23">
    <location>
        <begin position="416"/>
        <end position="422"/>
    </location>
</feature>
<feature type="strand" evidence="23">
    <location>
        <begin position="424"/>
        <end position="436"/>
    </location>
</feature>
<feature type="strand" evidence="23">
    <location>
        <begin position="439"/>
        <end position="448"/>
    </location>
</feature>
<feature type="strand" evidence="23">
    <location>
        <begin position="454"/>
        <end position="463"/>
    </location>
</feature>
<feature type="strand" evidence="23">
    <location>
        <begin position="481"/>
        <end position="488"/>
    </location>
</feature>
<feature type="strand" evidence="23">
    <location>
        <begin position="498"/>
        <end position="502"/>
    </location>
</feature>
<feature type="strand" evidence="23">
    <location>
        <begin position="507"/>
        <end position="509"/>
    </location>
</feature>
<feature type="helix" evidence="23">
    <location>
        <begin position="510"/>
        <end position="512"/>
    </location>
</feature>
<feature type="strand" evidence="23">
    <location>
        <begin position="517"/>
        <end position="522"/>
    </location>
</feature>
<feature type="strand" evidence="23">
    <location>
        <begin position="526"/>
        <end position="531"/>
    </location>
</feature>
<feature type="strand" evidence="23">
    <location>
        <begin position="534"/>
        <end position="536"/>
    </location>
</feature>
<feature type="strand" evidence="23">
    <location>
        <begin position="547"/>
        <end position="549"/>
    </location>
</feature>
<feature type="turn" evidence="23">
    <location>
        <begin position="553"/>
        <end position="556"/>
    </location>
</feature>
<feature type="strand" evidence="23">
    <location>
        <begin position="559"/>
        <end position="562"/>
    </location>
</feature>
<feature type="strand" evidence="23">
    <location>
        <begin position="585"/>
        <end position="587"/>
    </location>
</feature>
<feature type="strand" evidence="23">
    <location>
        <begin position="592"/>
        <end position="599"/>
    </location>
</feature>
<feature type="strand" evidence="23">
    <location>
        <begin position="606"/>
        <end position="610"/>
    </location>
</feature>
<feature type="strand" evidence="23">
    <location>
        <begin position="613"/>
        <end position="618"/>
    </location>
</feature>
<feature type="strand" evidence="23">
    <location>
        <begin position="624"/>
        <end position="634"/>
    </location>
</feature>
<feature type="strand" evidence="23">
    <location>
        <begin position="640"/>
        <end position="642"/>
    </location>
</feature>
<feature type="strand" evidence="23">
    <location>
        <begin position="646"/>
        <end position="651"/>
    </location>
</feature>
<feature type="strand" evidence="23">
    <location>
        <begin position="657"/>
        <end position="661"/>
    </location>
</feature>
<feature type="strand" evidence="23">
    <location>
        <begin position="667"/>
        <end position="671"/>
    </location>
</feature>
<feature type="strand" evidence="23">
    <location>
        <begin position="679"/>
        <end position="682"/>
    </location>
</feature>
<feature type="helix" evidence="23">
    <location>
        <begin position="683"/>
        <end position="692"/>
    </location>
</feature>
<feature type="helix" evidence="23">
    <location>
        <begin position="695"/>
        <end position="733"/>
    </location>
</feature>
<feature type="strand" evidence="23">
    <location>
        <begin position="734"/>
        <end position="736"/>
    </location>
</feature>
<feature type="helix" evidence="23">
    <location>
        <begin position="741"/>
        <end position="746"/>
    </location>
</feature>
<feature type="strand" evidence="23">
    <location>
        <begin position="817"/>
        <end position="823"/>
    </location>
</feature>
<feature type="strand" evidence="23">
    <location>
        <begin position="830"/>
        <end position="834"/>
    </location>
</feature>
<feature type="strand" evidence="23">
    <location>
        <begin position="837"/>
        <end position="840"/>
    </location>
</feature>
<feature type="strand" evidence="23">
    <location>
        <begin position="842"/>
        <end position="863"/>
    </location>
</feature>
<feature type="strand" evidence="23">
    <location>
        <begin position="866"/>
        <end position="869"/>
    </location>
</feature>
<feature type="strand" evidence="23">
    <location>
        <begin position="874"/>
        <end position="876"/>
    </location>
</feature>
<feature type="strand" evidence="23">
    <location>
        <begin position="892"/>
        <end position="898"/>
    </location>
</feature>
<feature type="strand" evidence="23">
    <location>
        <begin position="904"/>
        <end position="913"/>
    </location>
</feature>
<feature type="strand" evidence="23">
    <location>
        <begin position="916"/>
        <end position="925"/>
    </location>
</feature>
<feature type="turn" evidence="23">
    <location>
        <begin position="927"/>
        <end position="931"/>
    </location>
</feature>
<feature type="strand" evidence="23">
    <location>
        <begin position="934"/>
        <end position="951"/>
    </location>
</feature>
<feature type="strand" evidence="23">
    <location>
        <begin position="957"/>
        <end position="964"/>
    </location>
</feature>
<feature type="strand" evidence="23">
    <location>
        <begin position="969"/>
        <end position="971"/>
    </location>
</feature>
<feature type="strand" evidence="23">
    <location>
        <begin position="974"/>
        <end position="978"/>
    </location>
</feature>
<feature type="strand" evidence="23">
    <location>
        <begin position="990"/>
        <end position="995"/>
    </location>
</feature>
<feature type="strand" evidence="23">
    <location>
        <begin position="998"/>
        <end position="1000"/>
    </location>
</feature>
<feature type="strand" evidence="23">
    <location>
        <begin position="1017"/>
        <end position="1021"/>
    </location>
</feature>
<feature type="strand" evidence="23">
    <location>
        <begin position="1028"/>
        <end position="1030"/>
    </location>
</feature>
<feature type="helix" evidence="23">
    <location>
        <begin position="1054"/>
        <end position="1059"/>
    </location>
</feature>
<feature type="helix" evidence="23">
    <location>
        <begin position="1066"/>
        <end position="1068"/>
    </location>
</feature>
<feature type="helix" evidence="23">
    <location>
        <begin position="1071"/>
        <end position="1073"/>
    </location>
</feature>
<feature type="strand" evidence="23">
    <location>
        <begin position="1075"/>
        <end position="1077"/>
    </location>
</feature>
<feature type="turn" evidence="23">
    <location>
        <begin position="1078"/>
        <end position="1081"/>
    </location>
</feature>
<feature type="strand" evidence="23">
    <location>
        <begin position="1082"/>
        <end position="1085"/>
    </location>
</feature>
<feature type="strand" evidence="23">
    <location>
        <begin position="1089"/>
        <end position="1096"/>
    </location>
</feature>
<feature type="turn" evidence="23">
    <location>
        <begin position="1099"/>
        <end position="1101"/>
    </location>
</feature>
<feature type="strand" evidence="23">
    <location>
        <begin position="1102"/>
        <end position="1104"/>
    </location>
</feature>
<feature type="turn" evidence="23">
    <location>
        <begin position="1105"/>
        <end position="1107"/>
    </location>
</feature>
<feature type="strand" evidence="23">
    <location>
        <begin position="1112"/>
        <end position="1122"/>
    </location>
</feature>
<feature type="strand" evidence="23">
    <location>
        <begin position="1129"/>
        <end position="1136"/>
    </location>
</feature>
<feature type="strand" evidence="23">
    <location>
        <begin position="1141"/>
        <end position="1149"/>
    </location>
</feature>
<feature type="strand" evidence="23">
    <location>
        <begin position="1152"/>
        <end position="1155"/>
    </location>
</feature>
<feature type="strand" evidence="23">
    <location>
        <begin position="1157"/>
        <end position="1161"/>
    </location>
</feature>
<feature type="strand" evidence="23">
    <location>
        <begin position="1166"/>
        <end position="1173"/>
    </location>
</feature>
<feature type="strand" evidence="23">
    <location>
        <begin position="1175"/>
        <end position="1177"/>
    </location>
</feature>
<feature type="strand" evidence="23">
    <location>
        <begin position="1179"/>
        <end position="1184"/>
    </location>
</feature>
<feature type="strand" evidence="23">
    <location>
        <begin position="1189"/>
        <end position="1192"/>
    </location>
</feature>
<feature type="strand" evidence="23">
    <location>
        <begin position="1201"/>
        <end position="1205"/>
    </location>
</feature>
<feature type="helix" evidence="23">
    <location>
        <begin position="1220"/>
        <end position="1252"/>
    </location>
</feature>
<proteinExistence type="evidence at protein level"/>
<comment type="function">
    <molecule>Capsid protein</molecule>
    <text evidence="2 3 7 15">Forms an icosahedral capsid with a T=4 symmetry composed of 240 copies of the capsid protein surrounded by a lipid membrane through which penetrate 80 spikes composed of trimers of E1-E2 heterodimers (PubMed:35149682). The capsid protein binds to the viral RNA genome at a site adjacent to a ribosome binding site for viral genome translation following genome release (By similarity). Possesses a protease activity that results in its autocatalytic cleavage from the nascent structural protein (By similarity). Following its self-cleavage, the capsid protein transiently associates with ribosomes, and within several minutes the protein binds to viral RNA and rapidly assembles into icosahedric core particles (By similarity). The resulting nucleocapsid eventually associates with the cytoplasmic domain of the spike glycoprotein E2 at the cell membrane, leading to budding and formation of mature virions (By similarity). In case of infection, new virions attach to target cells and after clathrin-mediated endocytosis their membrane fuses with the host endosomal membrane (By similarity). This leads to the release of the nucleocapsid into the cytoplasm, followed by an uncoating event necessary for the genomic RNA to become accessible (By similarity). The uncoating might be triggered by the interaction of capsid proteins with ribosomes (By similarity). Binding of ribosomes would release the genomic RNA since the same region is genomic RNA-binding and ribosome-binding (By similarity). Specifically inhibits interleukin-1 receptor-associated kinase 1/IRAK1-dependent signaling during viral entry, representing a means by which the alphaviruses may evade innate immune detection and activation prior to viral gene expression (By similarity).</text>
</comment>
<comment type="function">
    <molecule>Assembly protein E3</molecule>
    <text evidence="2">Provides the signal sequence for the translocation of the precursor of protein E3/E2 to the host endoplasmic reticulum. Furin-cleaved E3 remains associated with spike glycoprotein E1 and mediates pH protection of the latter during the transport via the secretory pathway. After virion release from the host cell, the assembly protein E3 is gradually released in the extracellular space.</text>
</comment>
<comment type="function">
    <molecule>Spike glycoprotein E2</molecule>
    <text evidence="2 4 17">Plays a role in viral attachment to target host cell, by binding to the cell receptor MXRA8 (By similarity). The host LDLR may also act as a cell receptor for viral entry (PubMed:38245515). Synthesized as a p62 precursor which is processed by furin at the cell membrane just before virion budding, giving rise to E2-E1 heterodimer. The p62-E1 heterodimer is stable, whereas E2-E1 is unstable and dissociate at low pH. p62 is processed at the last step, presumably to avoid E1 fusion activation before its final export to cell surface. E2 C-terminus contains a transitory transmembrane that would be disrupted by palmitoylation, resulting in reorientation of the C-terminal tail from lumenal to cytoplasmic side. This step is critical since E2 C-terminus is involved in budding by interacting with capsid proteins. This release of E2 C-terminus in cytoplasm occurs lately in protein export, and precludes premature assembly of particles at the endoplasmic reticulum membrane (By similarity).</text>
</comment>
<comment type="function">
    <molecule>6K protein</molecule>
    <text evidence="2 3 16">Acts as a viroporin that participates in virus glycoprotein processing and transport to the plasma membrane, cell permeabilization and budding of viral particles (PubMed:38084773). Disrupts the calcium homeostasis of the cell, probably at the endoplasmic reticulum level (By similarity). This leads to cytoplasmic calcium elevation (By similarity). Because of its lipophilic properties, the 6K protein is postulated to influence the selection of lipids that interact with the transmembrane domains of the glycoproteins, which, in turn, affects the deformability of the bilayer required for the extreme curvature that occurs as budding proceeds. Present in low amount in virions, about 3% compared to viral glycoproteins (By similarity).</text>
</comment>
<comment type="function">
    <molecule>Spike glycoprotein E1</molecule>
    <text evidence="3">Class II viral fusion protein. Fusion activity is inactive as long as E1 is bound to E2 in mature virion. After virus attachment to target cell via host MXRA8 and endocytosis, acidification of the endosome induce dissociation of E1/E2 heterodimer and concomitant trimerization of the E1 subunits. This E1 trimer is fusion active, and promotes release of viral nucleocapsid in cytoplasm after endosome and viral membrane fusion. Efficient fusion requires the presence of cholesterol and sphingolipid in the target membrane.</text>
</comment>
<comment type="catalytic activity">
    <reaction evidence="2">
        <text>Autocatalytic release of the core protein from the N-terminus of the togavirus structural polyprotein by hydrolysis of a -Trp-|-Ser- bond.</text>
        <dbReference type="EC" id="3.4.21.90"/>
    </reaction>
</comment>
<comment type="subunit">
    <molecule>Capsid protein</molecule>
    <text evidence="3 10 11">Homodimer (By similarity). Homomultimer (By similarity). Interacts with host karyopherin KPNA4; this interaction allows the nuclear import of the viral capsid protein (By similarity). Interacts with spike glycoprotein E2 (By similarity). Interacts with host IRAK1; the interaction leads to inhibition of IRAK1-dependent signaling (By similarity).</text>
</comment>
<comment type="subunit">
    <molecule>Precursor of protein E3/E2</molecule>
    <text evidence="2 3 6 11">The precursor of protein E3/E2 and E1 form a heterodimer shortly after synthesis (By similarity).</text>
</comment>
<comment type="subunit">
    <molecule>Spike glycoprotein E1</molecule>
    <text evidence="2 3 11 15 17">Interacts with spike glycoprotein E2 (PubMed:35149682). The precursor of protein E3/E2 and E1 form a heterodimer shortly after synthesis (By similarity). Processing of the precursor of protein E3/E2 into E2 and E3 results in a heterodimer of the spike glycoproteins E2 and E1 (By similarity). Spike at virion surface are constituted of a trimer of E2-E1 heterodimers (By similarity). After target cell attachment and endocytosis, E1 change conformation to form homotrimers (By similarity). Interacts with 6K protein (By similarity). E1/E2 heterodimer interacts with host LDLR (PubMed:38245515).</text>
</comment>
<comment type="subunit">
    <molecule>Spike glycoprotein E2</molecule>
    <text evidence="3 4 15">Interacts with spike glycoprotein E1 (PubMed:35149682). Processing of the precursor of protein E3/E2 into E2 and E3 results in a heterodimer of the spike glycoproteins E2 and E1 (By similarity). Spike at virion surface are constituted of a trimer of E2-E1 heterodimers (By similarity). Interacts with 6K protein (By similarity). Interacts with host MXRA8; this interaction mediates virus entry (By similarity).</text>
</comment>
<comment type="subunit">
    <molecule>6K protein</molecule>
    <text evidence="3 9">Oligomer (By similarity). Interacts with spike glycoprotein E1. Interacts with spike glycoprotein E2 (By similarity).</text>
</comment>
<comment type="subcellular location">
    <molecule>Capsid protein</molecule>
    <subcellularLocation>
        <location evidence="3">Virion</location>
    </subcellularLocation>
    <subcellularLocation>
        <location evidence="11">Host cytoplasm</location>
    </subcellularLocation>
    <subcellularLocation>
        <location evidence="3">Host cell membrane</location>
    </subcellularLocation>
    <subcellularLocation>
        <location evidence="11">Host nucleus</location>
    </subcellularLocation>
    <text evidence="11">Shuttles between the cytoplasm and the nucleus.</text>
</comment>
<comment type="subcellular location">
    <molecule>Spike glycoprotein E2</molecule>
    <subcellularLocation>
        <location evidence="11">Virion membrane</location>
        <topology evidence="12">Single-pass type I membrane protein</topology>
    </subcellularLocation>
    <subcellularLocation>
        <location evidence="3">Host cell membrane</location>
        <topology evidence="11">Single-pass type I membrane protein</topology>
    </subcellularLocation>
</comment>
<comment type="subcellular location">
    <molecule>6K protein</molecule>
    <subcellularLocation>
        <location evidence="3">Host cell membrane</location>
        <topology evidence="12">Multi-pass membrane protein</topology>
    </subcellularLocation>
    <subcellularLocation>
        <location evidence="3">Virion membrane</location>
        <topology evidence="12">Multi-pass membrane protein</topology>
    </subcellularLocation>
    <subcellularLocation>
        <location evidence="3">Host Golgi apparatus</location>
    </subcellularLocation>
    <subcellularLocation>
        <location>Host Golgi apparatus</location>
        <location>Host trans-Golgi network</location>
    </subcellularLocation>
    <subcellularLocation>
        <location evidence="3">Host endoplasmic reticulum</location>
    </subcellularLocation>
</comment>
<comment type="subcellular location">
    <molecule>Spike glycoprotein E1</molecule>
    <subcellularLocation>
        <location evidence="11">Virion membrane</location>
        <topology evidence="12">Single-pass type I membrane protein</topology>
    </subcellularLocation>
    <subcellularLocation>
        <location evidence="3 11">Host cell membrane</location>
        <topology evidence="12">Single-pass type I membrane protein</topology>
    </subcellularLocation>
</comment>
<comment type="domain">
    <molecule>Capsid protein</molecule>
    <text evidence="3 5">The very N-terminus also plays a role in the particle assembly process (By similarity). The N-terminus also contains a nuclear localization signal and a supra nuclear export signal (supraNES), which is an unusually strong NES that mediates host CRM1 binding in the absence of RanGTP and thus can bind CRM1, not only in the nucleus, but also in the cytoplasm (By similarity). The C-terminus functions as a protease during translation to cleave itself from the translating structural polyprotein (By similarity).</text>
</comment>
<comment type="domain">
    <text evidence="2">Structural polyprotein: As soon as the capsid protein has been autocleaved, an internal uncleaved signal peptide directs the remaining polyprotein to the endoplasmic reticulum.</text>
</comment>
<comment type="PTM">
    <text evidence="2">Structural polyprotein: Specific enzymatic cleavages in vivo yield mature proteins. Capsid protein is auto-cleaved during polyprotein translation, unmasking a signal peptide at the N-terminus of the precursor of E3/E2 (By similarity). The remaining polyprotein is then targeted to the host endoplasmic reticulum, where host signal peptidase cleaves it into pE2, 6K and E1 proteins. pE2 is further processed to mature E3 and E2 by host furin in trans-Golgi vesicle (By similarity).</text>
</comment>
<comment type="PTM">
    <molecule>Spike glycoprotein E2</molecule>
    <text evidence="2">Palmitoylated via thioester bonds. These palmitoylations may induce disruption of the C-terminus transmembrane. This would result in the reorientation of E2 C-terminus from lumenal to cytoplasmic side.</text>
</comment>
<comment type="PTM">
    <molecule>Spike glycoprotein E1</molecule>
    <text evidence="2">N-glycosylated.</text>
</comment>
<comment type="PTM">
    <molecule>Spike glycoprotein E2</molecule>
    <text evidence="2">N-glycosylated.</text>
</comment>
<comment type="PTM">
    <molecule>Assembly protein E3</molecule>
    <text evidence="2">N-glycosylated.</text>
</comment>
<comment type="PTM">
    <molecule>6K protein</molecule>
    <text evidence="2">Palmitoylated via thioester bonds.</text>
</comment>
<comment type="miscellaneous">
    <text evidence="19">Belongs to the Old World alphaviruses that usually cause fever, maculopapular rash, arthralgia and myalgia.</text>
</comment>
<comment type="miscellaneous">
    <text evidence="10">Structural polyprotein: Translated from a subgenomic RNA synthesized during togavirus replication.</text>
</comment>